<organism>
    <name type="scientific">Sendai virus (strain Z)</name>
    <name type="common">SeV</name>
    <name type="synonym">Sendai virus (strain HVJ)</name>
    <dbReference type="NCBI Taxonomy" id="11198"/>
    <lineage>
        <taxon>Viruses</taxon>
        <taxon>Riboviria</taxon>
        <taxon>Orthornavirae</taxon>
        <taxon>Negarnaviricota</taxon>
        <taxon>Haploviricotina</taxon>
        <taxon>Monjiviricetes</taxon>
        <taxon>Mononegavirales</taxon>
        <taxon>Paramyxoviridae</taxon>
        <taxon>Feraresvirinae</taxon>
        <taxon>Respirovirus</taxon>
        <taxon>Respirovirus muris</taxon>
    </lineage>
</organism>
<sequence length="568" mass="62026">MDQDAFILKEDSEVEREAPGGRESLSDVIGFLDAVLSSEPTDIGGDRSWLHNTINTPQGPGSAHRAKSEGEGEVSTPSTQDNRSGEESRVSGRTSKPEAEAHAGNLDKQNIHRAFGGRTGTNSVSQDLGDGGDSGILENPPNERGYPRSGIEDENREMAAHPDKRGEDQAEGLPEEVRGSTSLPDEGEGGASNNGRSMEPGSSHSARVTGVLVIPSPELEEAVLRRNKRRPTNSGSKPLTPATVPGTRSPPLNRYNSTGSPPGKPPSTQDEHINSGDTPAVRVKDRKPPIGTRSVSDCPANGRSIHPGLETDSTKKGIGENTSSMKEMATLLTSLGVIQSAQEFESSRDASYVFARRALKSANYAEMTFNVCGLILSAEKSSARKVDENKQLLKQIQESVESFRDTYKRFSEYQKEQNSLLMSNLSTLHIITDRGGKTDNTDSLTRSPSVFAKSKENKTKATRFDPSMETLEDMKYKPDLIREDEFRDEIRNPVYQERDTEPRASNASRLLPSKEKPTMHSLRLVIESSPLSRAEKAAYVKSLSKCKTDQEVKAVMELVEEDIESLTN</sequence>
<dbReference type="EMBL" id="X00087">
    <property type="protein sequence ID" value="CAA24946.1"/>
    <property type="molecule type" value="Genomic_RNA"/>
</dbReference>
<dbReference type="EMBL" id="M30202">
    <property type="protein sequence ID" value="AAB06279.1"/>
    <property type="molecule type" value="Genomic_RNA"/>
</dbReference>
<dbReference type="EMBL" id="M30203">
    <property type="protein sequence ID" value="AAB06285.1"/>
    <property type="molecule type" value="Genomic_RNA"/>
</dbReference>
<dbReference type="EMBL" id="M30204">
    <property type="protein sequence ID" value="AAB06197.1"/>
    <property type="molecule type" value="Genomic_RNA"/>
</dbReference>
<dbReference type="EMBL" id="M69046">
    <property type="protein sequence ID" value="AAB06291.1"/>
    <property type="molecule type" value="Genomic_RNA"/>
</dbReference>
<dbReference type="PIR" id="A00726">
    <property type="entry name" value="RRNZSV"/>
</dbReference>
<dbReference type="BMRB" id="P04860"/>
<dbReference type="SMR" id="P04860"/>
<dbReference type="Proteomes" id="UP000006560">
    <property type="component" value="Genome"/>
</dbReference>
<dbReference type="Proteomes" id="UP000110830">
    <property type="component" value="Genome"/>
</dbReference>
<dbReference type="Proteomes" id="UP000163956">
    <property type="component" value="Genome"/>
</dbReference>
<dbReference type="Proteomes" id="UP000169749">
    <property type="component" value="Genome"/>
</dbReference>
<dbReference type="Proteomes" id="UP000181310">
    <property type="component" value="Genome"/>
</dbReference>
<dbReference type="GO" id="GO:0003723">
    <property type="term" value="F:RNA binding"/>
    <property type="evidence" value="ECO:0007669"/>
    <property type="project" value="InterPro"/>
</dbReference>
<dbReference type="GO" id="GO:0003968">
    <property type="term" value="F:RNA-directed RNA polymerase activity"/>
    <property type="evidence" value="ECO:0007669"/>
    <property type="project" value="InterPro"/>
</dbReference>
<dbReference type="GO" id="GO:0006351">
    <property type="term" value="P:DNA-templated transcription"/>
    <property type="evidence" value="ECO:0007669"/>
    <property type="project" value="InterPro"/>
</dbReference>
<dbReference type="GO" id="GO:0019079">
    <property type="term" value="P:viral genome replication"/>
    <property type="evidence" value="ECO:0007669"/>
    <property type="project" value="InterPro"/>
</dbReference>
<dbReference type="CDD" id="cd21031">
    <property type="entry name" value="MEV_P-protein-C_like"/>
    <property type="match status" value="1"/>
</dbReference>
<dbReference type="Gene3D" id="1.10.287.340">
    <property type="match status" value="1"/>
</dbReference>
<dbReference type="Gene3D" id="1.10.8.10">
    <property type="entry name" value="DNA helicase RuvA subunit, C-terminal domain"/>
    <property type="match status" value="1"/>
</dbReference>
<dbReference type="Gene3D" id="1.10.287.320">
    <property type="entry name" value="Viral phosphoprotein oligmorisation site domain"/>
    <property type="match status" value="1"/>
</dbReference>
<dbReference type="InterPro" id="IPR002693">
    <property type="entry name" value="Paramyxo_PProtein_C"/>
</dbReference>
<dbReference type="InterPro" id="IPR043097">
    <property type="entry name" value="PProtein_oligomer_dom1"/>
</dbReference>
<dbReference type="InterPro" id="IPR016075">
    <property type="entry name" value="RNA_pol_Pprot-P_XD_paramyxovir"/>
</dbReference>
<dbReference type="Pfam" id="PF01806">
    <property type="entry name" value="Paramyxo_P"/>
    <property type="match status" value="1"/>
</dbReference>
<dbReference type="SUPFAM" id="SSF58034">
    <property type="entry name" value="Multimerization domain of the phosphoprotein from sendai virus"/>
    <property type="match status" value="1"/>
</dbReference>
<dbReference type="SUPFAM" id="SSF101089">
    <property type="entry name" value="Phosphoprotein XD domain"/>
    <property type="match status" value="1"/>
</dbReference>
<gene>
    <name type="primary">P/V/C</name>
</gene>
<evidence type="ECO:0000250" key="1"/>
<evidence type="ECO:0000250" key="2">
    <source>
        <dbReference type="UniProtKB" id="P04859"/>
    </source>
</evidence>
<evidence type="ECO:0000250" key="3">
    <source>
        <dbReference type="UniProtKB" id="P06162"/>
    </source>
</evidence>
<evidence type="ECO:0000250" key="4">
    <source>
        <dbReference type="UniProtKB" id="Q77M42"/>
    </source>
</evidence>
<evidence type="ECO:0000256" key="5">
    <source>
        <dbReference type="SAM" id="MobiDB-lite"/>
    </source>
</evidence>
<evidence type="ECO:0000269" key="6">
    <source>
    </source>
</evidence>
<evidence type="ECO:0000305" key="7"/>
<comment type="function">
    <text evidence="3 4">Essential cofactor of the RNA polymerase L that plays a central role in the transcription and replication by forming the polymerase complex with RNA polymerase L and recruiting L to the genomic N-RNA template for RNA synthesis. Also plays a central role in the encapsidation of nascent RNA chains by forming the encapsidation complex with the nucleocapsid protein N (N-P complex). Acts as a chaperone for newly synthesized free N protein, so-called N0, allowing encapsidation of nascent RNA chains during replication (By similarity). The nucleoprotein protein N prevents excessive phosphorylation of P, which leads to down-regulation of viral transcription/ replication. Participates, together with N, in the formation of viral factories (viroplasms), which are large inclusions in the host cytoplasm where replication takes place (By similarity). Recruits host PI4KB and remodel the host endoplasmic reticulum membrane to form viral replication factories (By similarity).</text>
</comment>
<comment type="subunit">
    <text evidence="2">Homotetramer. Interacts (via multimerization domain) with polymerase L; this interaction forms the polymerase complex. Interacts (via N-terminus) with N0; this interaction allows P to chaperon N0 before encapsidation and form the N-P complex. Interacts (via C-terminus) with N-RNA template; this interaction positions the polymerase on the template.</text>
</comment>
<comment type="domain">
    <text evidence="2 3">The N-terminus consists of a long intrinsically disordered tail (By similarity). The central part contains the coiled-coil multimerization domain (PMD). Forms a four-stranded coiled coil structure. The C-terminus constitutes the alpha-helical domain that binds to the nucleocapsid (N-RNA complex) (By similarity).</text>
</comment>
<comment type="PTM">
    <text evidence="2">Phosphorylated by PKC/PRKCZ, and other unknown kinases. Phosphorylation is necessary for viral transcription and replication. The N-terminus contains the majority of phosphorylated sites. Ser-249 is the major site of phosphorylation, but is not necessary for most functions.</text>
</comment>
<comment type="RNA editing">
    <location>
        <position position="318" evidence="6"/>
    </location>
    <text>Partially edited. RNA editing at this position consists of an insertion of one or two guanine nucleotides. The sequence displayed here is the P protein, derived from the unedited RNA. The edited RNA gives rise to the V protein (+1G) (AC P69282), and the W protein (+2G) (AC P69283).</text>
</comment>
<comment type="miscellaneous">
    <text>The P/V/C gene has two overlapping open reading frames. One encodes the P/V/W proteins and the other the C/Y proteins.</text>
</comment>
<comment type="similarity">
    <text evidence="7">Belongs to the respirovirus P protein family.</text>
</comment>
<organismHost>
    <name type="scientific">Cavia cutleri</name>
    <name type="common">Guinea pig</name>
    <dbReference type="NCBI Taxonomy" id="10144"/>
</organismHost>
<organismHost>
    <name type="scientific">Cricetidae sp.</name>
    <name type="common">Hamster</name>
    <dbReference type="NCBI Taxonomy" id="36483"/>
</organismHost>
<organismHost>
    <name type="scientific">Mus musculus</name>
    <name type="common">Mouse</name>
    <dbReference type="NCBI Taxonomy" id="10090"/>
</organismHost>
<organismHost>
    <name type="scientific">Rattus norvegicus</name>
    <name type="common">Rat</name>
    <dbReference type="NCBI Taxonomy" id="10116"/>
</organismHost>
<feature type="chain" id="PRO_0000142716" description="Phosphoprotein">
    <location>
        <begin position="1"/>
        <end position="568"/>
    </location>
</feature>
<feature type="region of interest" description="Disordered" evidence="5">
    <location>
        <begin position="1"/>
        <end position="23"/>
    </location>
</feature>
<feature type="region of interest" description="N0 binding" evidence="2">
    <location>
        <begin position="33"/>
        <end position="41"/>
    </location>
</feature>
<feature type="region of interest" description="Disordered" evidence="5">
    <location>
        <begin position="38"/>
        <end position="320"/>
    </location>
</feature>
<feature type="region of interest" description="Multimerization" evidence="3">
    <location>
        <begin position="344"/>
        <end position="411"/>
    </location>
</feature>
<feature type="region of interest" description="L protein binding" evidence="2">
    <location>
        <begin position="412"/>
        <end position="445"/>
    </location>
</feature>
<feature type="region of interest" description="Interaction with the nucleocapsid (N-RNA)" evidence="2">
    <location>
        <begin position="479"/>
        <end position="568"/>
    </location>
</feature>
<feature type="region of interest" description="Disordered" evidence="5">
    <location>
        <begin position="496"/>
        <end position="516"/>
    </location>
</feature>
<feature type="coiled-coil region" evidence="1">
    <location>
        <begin position="364"/>
        <end position="429"/>
    </location>
</feature>
<feature type="compositionally biased region" description="Basic and acidic residues" evidence="5">
    <location>
        <begin position="7"/>
        <end position="20"/>
    </location>
</feature>
<feature type="compositionally biased region" description="Polar residues" evidence="5">
    <location>
        <begin position="50"/>
        <end position="59"/>
    </location>
</feature>
<feature type="compositionally biased region" description="Basic and acidic residues" evidence="5">
    <location>
        <begin position="83"/>
        <end position="101"/>
    </location>
</feature>
<feature type="compositionally biased region" description="Basic and acidic residues" evidence="5">
    <location>
        <begin position="150"/>
        <end position="168"/>
    </location>
</feature>
<feature type="compositionally biased region" description="Polar residues" evidence="5">
    <location>
        <begin position="191"/>
        <end position="206"/>
    </location>
</feature>
<feature type="modified residue" description="Phosphoserine; by host" evidence="1">
    <location>
        <position position="68"/>
    </location>
</feature>
<feature type="modified residue" description="Phosphoserine; by host" evidence="1">
    <location>
        <position position="125"/>
    </location>
</feature>
<feature type="modified residue" description="Phosphoserine; by host" evidence="1">
    <location>
        <position position="192"/>
    </location>
</feature>
<feature type="modified residue" description="Phosphoserine; by host" evidence="1">
    <location>
        <position position="249"/>
    </location>
</feature>
<feature type="modified residue" description="Phosphoserine; by host" evidence="1">
    <location>
        <position position="257"/>
    </location>
</feature>
<feature type="modified residue" description="Phosphoserine; by host" evidence="1">
    <location>
        <position position="260"/>
    </location>
</feature>
<feature type="modified residue" description="Phosphoserine; by host" evidence="1">
    <location>
        <position position="447"/>
    </location>
</feature>
<feature type="modified residue" description="Phosphoserine; by host" evidence="1">
    <location>
        <position position="449"/>
    </location>
</feature>
<feature type="sequence variant" description="In strain: Mutant F1-R / T-5 revertant.">
    <original>N</original>
    <variation>S</variation>
    <location>
        <position position="155"/>
    </location>
</feature>
<feature type="sequence variant" description="In strain: Mutant F1-R, Mutant ts-f1 and Mutant F1-R / T-5 revertant.">
    <original>S</original>
    <variation>G</variation>
    <location>
        <position position="180"/>
    </location>
</feature>
<feature type="sequence variant" description="In strain: Mutant F1-R, Mutant ts-f1 and Mutant F1-R / T-5 revertant.">
    <original>S</original>
    <variation>P</variation>
    <location>
        <position position="304"/>
    </location>
</feature>
<feature type="sequence variant" description="In strain: Mutant F1-R, Mutant ts-f1 and Mutant F1-R / T-5 revertant.">
    <original>T</original>
    <variation>I</variation>
    <location>
        <position position="406"/>
    </location>
</feature>
<reference key="1">
    <citation type="journal article" date="1983" name="Nucleic Acids Res.">
        <title>Sequence of 3,687 nucleotides from the 3' end of Sendai virus genome RNA and the predicted amino acid sequences of viral NP, P and C proteins.</title>
        <authorList>
            <person name="Shioda T."/>
            <person name="Hidaka Y."/>
            <person name="Kanda T."/>
            <person name="Shibuta H."/>
            <person name="Nomoto A."/>
            <person name="Iwasaki K."/>
        </authorList>
    </citation>
    <scope>NUCLEOTIDE SEQUENCE [GENOMIC RNA]</scope>
</reference>
<reference key="2">
    <citation type="submission" date="1985-02" db="EMBL/GenBank/DDBJ databases">
        <authorList>
            <person name="Shibuta H."/>
        </authorList>
    </citation>
    <scope>NUCLEOTIDE SEQUENCE [GENOMIC RNA]</scope>
</reference>
<reference key="3">
    <citation type="journal article" date="1990" name="Virology">
        <title>Nucleotide sequence analyses of the genes encoding the HN, M, NP, P, and L proteins of two host range mutants of Sendai virus.</title>
        <authorList>
            <person name="Middleton Y."/>
            <person name="Tashiro M."/>
            <person name="Thai T."/>
            <person name="Oh J."/>
            <person name="Seymour J."/>
            <person name="Pritzer E."/>
            <person name="Klenk H.-D."/>
            <person name="Rott R."/>
            <person name="Seto J.T."/>
        </authorList>
    </citation>
    <scope>NUCLEOTIDE SEQUENCE [GENOMIC RNA]</scope>
    <source>
        <strain>Mutant F1-R</strain>
        <strain>Mutant ts-f1</strain>
    </source>
</reference>
<reference key="4">
    <citation type="journal article" date="1991" name="Virology">
        <title>Pneumotropic revertants derived from a pantropic mutant, F1-R, of Sendai virus.</title>
        <authorList>
            <person name="Tashiro M."/>
            <person name="James I."/>
            <person name="Karri S."/>
            <person name="Wahn K."/>
            <person name="Tobita K."/>
            <person name="Klenk H.-D."/>
            <person name="Rott R."/>
            <person name="Seto J.T."/>
        </authorList>
    </citation>
    <scope>NUCLEOTIDE SEQUENCE [GENOMIC RNA]</scope>
    <source>
        <strain>Mutant F1-R / T-5 revertant</strain>
    </source>
</reference>
<reference key="5">
    <citation type="journal article" date="1991" name="EMBO J.">
        <title>The Sendai virus P gene expresses both an essential protein and an inhibitor of RNA synthesis by shuffling modules via mRNA editing.</title>
        <authorList>
            <person name="Curran J."/>
            <person name="Boeck R."/>
            <person name="Kolakofsky D."/>
        </authorList>
    </citation>
    <scope>RNA EDITING</scope>
</reference>
<keyword id="KW-0143">Chaperone</keyword>
<keyword id="KW-0175">Coiled coil</keyword>
<keyword id="KW-0597">Phosphoprotein</keyword>
<keyword id="KW-0691">RNA editing</keyword>
<keyword id="KW-0693">Viral RNA replication</keyword>
<proteinExistence type="inferred from homology"/>
<name>PHOSP_SENDZ</name>
<accession>P04860</accession>
<accession>P27565</accession>
<protein>
    <recommendedName>
        <fullName>Phosphoprotein</fullName>
        <shortName>Protein P</shortName>
    </recommendedName>
</protein>